<name>Y1670_STAAC</name>
<comment type="similarity">
    <text evidence="1">Belongs to the UPF0473 family.</text>
</comment>
<evidence type="ECO:0000305" key="1"/>
<accession>Q5HFE7</accession>
<proteinExistence type="inferred from homology"/>
<reference key="1">
    <citation type="journal article" date="2005" name="J. Bacteriol.">
        <title>Insights on evolution of virulence and resistance from the complete genome analysis of an early methicillin-resistant Staphylococcus aureus strain and a biofilm-producing methicillin-resistant Staphylococcus epidermidis strain.</title>
        <authorList>
            <person name="Gill S.R."/>
            <person name="Fouts D.E."/>
            <person name="Archer G.L."/>
            <person name="Mongodin E.F."/>
            <person name="DeBoy R.T."/>
            <person name="Ravel J."/>
            <person name="Paulsen I.T."/>
            <person name="Kolonay J.F."/>
            <person name="Brinkac L.M."/>
            <person name="Beanan M.J."/>
            <person name="Dodson R.J."/>
            <person name="Daugherty S.C."/>
            <person name="Madupu R."/>
            <person name="Angiuoli S.V."/>
            <person name="Durkin A.S."/>
            <person name="Haft D.H."/>
            <person name="Vamathevan J.J."/>
            <person name="Khouri H."/>
            <person name="Utterback T.R."/>
            <person name="Lee C."/>
            <person name="Dimitrov G."/>
            <person name="Jiang L."/>
            <person name="Qin H."/>
            <person name="Weidman J."/>
            <person name="Tran K."/>
            <person name="Kang K.H."/>
            <person name="Hance I.R."/>
            <person name="Nelson K.E."/>
            <person name="Fraser C.M."/>
        </authorList>
    </citation>
    <scope>NUCLEOTIDE SEQUENCE [LARGE SCALE GENOMIC DNA]</scope>
    <source>
        <strain>COL</strain>
    </source>
</reference>
<gene>
    <name type="ordered locus">SACOL1670</name>
</gene>
<feature type="chain" id="PRO_0000299290" description="UPF0473 protein SACOL1670">
    <location>
        <begin position="1"/>
        <end position="102"/>
    </location>
</feature>
<protein>
    <recommendedName>
        <fullName>UPF0473 protein SACOL1670</fullName>
    </recommendedName>
</protein>
<organism>
    <name type="scientific">Staphylococcus aureus (strain COL)</name>
    <dbReference type="NCBI Taxonomy" id="93062"/>
    <lineage>
        <taxon>Bacteria</taxon>
        <taxon>Bacillati</taxon>
        <taxon>Bacillota</taxon>
        <taxon>Bacilli</taxon>
        <taxon>Bacillales</taxon>
        <taxon>Staphylococcaceae</taxon>
        <taxon>Staphylococcus</taxon>
    </lineage>
</organism>
<dbReference type="EMBL" id="CP000046">
    <property type="protein sequence ID" value="AAW36777.1"/>
    <property type="molecule type" value="Genomic_DNA"/>
</dbReference>
<dbReference type="RefSeq" id="WP_000134779.1">
    <property type="nucleotide sequence ID" value="NZ_JBGOFO010000003.1"/>
</dbReference>
<dbReference type="KEGG" id="sac:SACOL1670"/>
<dbReference type="HOGENOM" id="CLU_146610_2_1_9"/>
<dbReference type="Proteomes" id="UP000000530">
    <property type="component" value="Chromosome"/>
</dbReference>
<dbReference type="HAMAP" id="MF_01448">
    <property type="entry name" value="UPF0473"/>
    <property type="match status" value="1"/>
</dbReference>
<dbReference type="InterPro" id="IPR009711">
    <property type="entry name" value="UPF0473"/>
</dbReference>
<dbReference type="NCBIfam" id="NF010214">
    <property type="entry name" value="PRK13678.1-1"/>
    <property type="match status" value="1"/>
</dbReference>
<dbReference type="PANTHER" id="PTHR40066">
    <property type="entry name" value="UPF0473 PROTEIN CBO2561/CLC_2432"/>
    <property type="match status" value="1"/>
</dbReference>
<dbReference type="PANTHER" id="PTHR40066:SF1">
    <property type="entry name" value="UPF0473 PROTEIN CBO2561_CLC_2432"/>
    <property type="match status" value="1"/>
</dbReference>
<dbReference type="Pfam" id="PF06949">
    <property type="entry name" value="DUF1292"/>
    <property type="match status" value="1"/>
</dbReference>
<sequence>MTEHNHDSQLEINNEEELLTLFDEEGNEVLYRKVLEFYHPEFKKEYVILAEEGAQSDEDDMIELVPMINEPDESGDGGKLVPIETDEEWDMIEEVVNTEMEE</sequence>